<evidence type="ECO:0000255" key="1">
    <source>
        <dbReference type="HAMAP-Rule" id="MF_01635"/>
    </source>
</evidence>
<sequence>MINLRQQMPHYLRLMRFDKPVGIFLLLWPTLWAVWIAAKGAPSFKIAVIFIAGSVVMRAAGCIVNDFADRHLDKHVQRTQMRPLASGSVSVTEAMLLFAVLSLIAFTLVLLLNRLTVELAVIGILLALVYPFLKRFTHLPQLWLGVAFSWSIPMAFAATVGHVPAVAWLLFFAAVLWPIVYDTQYAMIDREDDVKVGIKSTAILFGRYDRLMIGLLQGSVLLTFGLLGWYLRFNYWFYLGLLVALGLMCYQQFLIRHRKPPDCFAAFRNNNWVGFFIFLGILLTYRN</sequence>
<accession>Q83F93</accession>
<name>UBIA_COXBU</name>
<gene>
    <name evidence="1" type="primary">ubiA</name>
    <name type="ordered locus">CBU_0055</name>
</gene>
<dbReference type="EC" id="2.5.1.39" evidence="1"/>
<dbReference type="EMBL" id="AE016828">
    <property type="protein sequence ID" value="AAO89622.1"/>
    <property type="molecule type" value="Genomic_DNA"/>
</dbReference>
<dbReference type="RefSeq" id="NP_819108.1">
    <property type="nucleotide sequence ID" value="NC_002971.4"/>
</dbReference>
<dbReference type="RefSeq" id="WP_005772835.1">
    <property type="nucleotide sequence ID" value="NZ_CDBG01000001.1"/>
</dbReference>
<dbReference type="SMR" id="Q83F93"/>
<dbReference type="STRING" id="227377.CBU_0055"/>
<dbReference type="EnsemblBacteria" id="AAO89622">
    <property type="protein sequence ID" value="AAO89622"/>
    <property type="gene ID" value="CBU_0055"/>
</dbReference>
<dbReference type="GeneID" id="1207917"/>
<dbReference type="KEGG" id="cbu:CBU_0055"/>
<dbReference type="PATRIC" id="fig|227377.7.peg.57"/>
<dbReference type="eggNOG" id="COG0382">
    <property type="taxonomic scope" value="Bacteria"/>
</dbReference>
<dbReference type="HOGENOM" id="CLU_034879_1_0_6"/>
<dbReference type="OrthoDB" id="9782418at2"/>
<dbReference type="UniPathway" id="UPA00232"/>
<dbReference type="Proteomes" id="UP000002671">
    <property type="component" value="Chromosome"/>
</dbReference>
<dbReference type="GO" id="GO:0005886">
    <property type="term" value="C:plasma membrane"/>
    <property type="evidence" value="ECO:0000318"/>
    <property type="project" value="GO_Central"/>
</dbReference>
<dbReference type="GO" id="GO:0008412">
    <property type="term" value="F:4-hydroxybenzoate polyprenyltransferase activity"/>
    <property type="evidence" value="ECO:0000318"/>
    <property type="project" value="GO_Central"/>
</dbReference>
<dbReference type="GO" id="GO:0006744">
    <property type="term" value="P:ubiquinone biosynthetic process"/>
    <property type="evidence" value="ECO:0000318"/>
    <property type="project" value="GO_Central"/>
</dbReference>
<dbReference type="CDD" id="cd13959">
    <property type="entry name" value="PT_UbiA_COQ2"/>
    <property type="match status" value="1"/>
</dbReference>
<dbReference type="FunFam" id="1.10.357.140:FF:000002">
    <property type="entry name" value="4-hydroxybenzoate octaprenyltransferase"/>
    <property type="match status" value="1"/>
</dbReference>
<dbReference type="FunFam" id="1.20.120.1780:FF:000001">
    <property type="entry name" value="4-hydroxybenzoate octaprenyltransferase"/>
    <property type="match status" value="1"/>
</dbReference>
<dbReference type="Gene3D" id="1.10.357.140">
    <property type="entry name" value="UbiA prenyltransferase"/>
    <property type="match status" value="1"/>
</dbReference>
<dbReference type="Gene3D" id="1.20.120.1780">
    <property type="entry name" value="UbiA prenyltransferase"/>
    <property type="match status" value="1"/>
</dbReference>
<dbReference type="HAMAP" id="MF_01635">
    <property type="entry name" value="UbiA"/>
    <property type="match status" value="1"/>
</dbReference>
<dbReference type="InterPro" id="IPR006370">
    <property type="entry name" value="HB_polyprenyltransferase-like"/>
</dbReference>
<dbReference type="InterPro" id="IPR039653">
    <property type="entry name" value="Prenyltransferase"/>
</dbReference>
<dbReference type="InterPro" id="IPR000537">
    <property type="entry name" value="UbiA_prenyltransferase"/>
</dbReference>
<dbReference type="InterPro" id="IPR030470">
    <property type="entry name" value="UbiA_prenylTrfase_CS"/>
</dbReference>
<dbReference type="InterPro" id="IPR044878">
    <property type="entry name" value="UbiA_sf"/>
</dbReference>
<dbReference type="NCBIfam" id="TIGR01474">
    <property type="entry name" value="ubiA_proteo"/>
    <property type="match status" value="1"/>
</dbReference>
<dbReference type="PANTHER" id="PTHR11048:SF28">
    <property type="entry name" value="4-HYDROXYBENZOATE POLYPRENYLTRANSFERASE, MITOCHONDRIAL"/>
    <property type="match status" value="1"/>
</dbReference>
<dbReference type="PANTHER" id="PTHR11048">
    <property type="entry name" value="PRENYLTRANSFERASES"/>
    <property type="match status" value="1"/>
</dbReference>
<dbReference type="Pfam" id="PF01040">
    <property type="entry name" value="UbiA"/>
    <property type="match status" value="1"/>
</dbReference>
<dbReference type="PROSITE" id="PS00943">
    <property type="entry name" value="UBIA"/>
    <property type="match status" value="1"/>
</dbReference>
<keyword id="KW-0997">Cell inner membrane</keyword>
<keyword id="KW-1003">Cell membrane</keyword>
<keyword id="KW-0460">Magnesium</keyword>
<keyword id="KW-0472">Membrane</keyword>
<keyword id="KW-1185">Reference proteome</keyword>
<keyword id="KW-0808">Transferase</keyword>
<keyword id="KW-0812">Transmembrane</keyword>
<keyword id="KW-1133">Transmembrane helix</keyword>
<keyword id="KW-0831">Ubiquinone biosynthesis</keyword>
<proteinExistence type="inferred from homology"/>
<protein>
    <recommendedName>
        <fullName evidence="1">4-hydroxybenzoate octaprenyltransferase</fullName>
        <ecNumber evidence="1">2.5.1.39</ecNumber>
    </recommendedName>
    <alternativeName>
        <fullName evidence="1">4-HB polyprenyltransferase</fullName>
    </alternativeName>
</protein>
<organism>
    <name type="scientific">Coxiella burnetii (strain RSA 493 / Nine Mile phase I)</name>
    <dbReference type="NCBI Taxonomy" id="227377"/>
    <lineage>
        <taxon>Bacteria</taxon>
        <taxon>Pseudomonadati</taxon>
        <taxon>Pseudomonadota</taxon>
        <taxon>Gammaproteobacteria</taxon>
        <taxon>Legionellales</taxon>
        <taxon>Coxiellaceae</taxon>
        <taxon>Coxiella</taxon>
    </lineage>
</organism>
<comment type="function">
    <text evidence="1">Catalyzes the prenylation of para-hydroxybenzoate (PHB) with an all-trans polyprenyl group. Mediates the second step in the final reaction sequence of ubiquinone-8 (UQ-8) biosynthesis, which is the condensation of the polyisoprenoid side chain with PHB, generating the first membrane-bound Q intermediate 3-octaprenyl-4-hydroxybenzoate.</text>
</comment>
<comment type="catalytic activity">
    <reaction evidence="1">
        <text>all-trans-octaprenyl diphosphate + 4-hydroxybenzoate = 4-hydroxy-3-(all-trans-octaprenyl)benzoate + diphosphate</text>
        <dbReference type="Rhea" id="RHEA:27782"/>
        <dbReference type="ChEBI" id="CHEBI:1617"/>
        <dbReference type="ChEBI" id="CHEBI:17879"/>
        <dbReference type="ChEBI" id="CHEBI:33019"/>
        <dbReference type="ChEBI" id="CHEBI:57711"/>
        <dbReference type="EC" id="2.5.1.39"/>
    </reaction>
</comment>
<comment type="cofactor">
    <cofactor evidence="1">
        <name>Mg(2+)</name>
        <dbReference type="ChEBI" id="CHEBI:18420"/>
    </cofactor>
</comment>
<comment type="pathway">
    <text evidence="1">Cofactor biosynthesis; ubiquinone biosynthesis.</text>
</comment>
<comment type="subcellular location">
    <subcellularLocation>
        <location evidence="1">Cell inner membrane</location>
        <topology evidence="1">Multi-pass membrane protein</topology>
    </subcellularLocation>
</comment>
<comment type="similarity">
    <text evidence="1">Belongs to the UbiA prenyltransferase family.</text>
</comment>
<reference key="1">
    <citation type="journal article" date="2003" name="Proc. Natl. Acad. Sci. U.S.A.">
        <title>Complete genome sequence of the Q-fever pathogen, Coxiella burnetii.</title>
        <authorList>
            <person name="Seshadri R."/>
            <person name="Paulsen I.T."/>
            <person name="Eisen J.A."/>
            <person name="Read T.D."/>
            <person name="Nelson K.E."/>
            <person name="Nelson W.C."/>
            <person name="Ward N.L."/>
            <person name="Tettelin H."/>
            <person name="Davidsen T.M."/>
            <person name="Beanan M.J."/>
            <person name="DeBoy R.T."/>
            <person name="Daugherty S.C."/>
            <person name="Brinkac L.M."/>
            <person name="Madupu R."/>
            <person name="Dodson R.J."/>
            <person name="Khouri H.M."/>
            <person name="Lee K.H."/>
            <person name="Carty H.A."/>
            <person name="Scanlan D."/>
            <person name="Heinzen R.A."/>
            <person name="Thompson H.A."/>
            <person name="Samuel J.E."/>
            <person name="Fraser C.M."/>
            <person name="Heidelberg J.F."/>
        </authorList>
    </citation>
    <scope>NUCLEOTIDE SEQUENCE [LARGE SCALE GENOMIC DNA]</scope>
    <source>
        <strain>RSA 493 / Nine Mile phase I</strain>
    </source>
</reference>
<feature type="chain" id="PRO_0000262790" description="4-hydroxybenzoate octaprenyltransferase">
    <location>
        <begin position="1"/>
        <end position="287"/>
    </location>
</feature>
<feature type="transmembrane region" description="Helical" evidence="1">
    <location>
        <begin position="21"/>
        <end position="41"/>
    </location>
</feature>
<feature type="transmembrane region" description="Helical" evidence="1">
    <location>
        <begin position="44"/>
        <end position="64"/>
    </location>
</feature>
<feature type="transmembrane region" description="Helical" evidence="1">
    <location>
        <begin position="91"/>
        <end position="111"/>
    </location>
</feature>
<feature type="transmembrane region" description="Helical" evidence="1">
    <location>
        <begin position="112"/>
        <end position="132"/>
    </location>
</feature>
<feature type="transmembrane region" description="Helical" evidence="1">
    <location>
        <begin position="139"/>
        <end position="159"/>
    </location>
</feature>
<feature type="transmembrane region" description="Helical" evidence="1">
    <location>
        <begin position="160"/>
        <end position="180"/>
    </location>
</feature>
<feature type="transmembrane region" description="Helical" evidence="1">
    <location>
        <begin position="211"/>
        <end position="231"/>
    </location>
</feature>
<feature type="transmembrane region" description="Helical" evidence="1">
    <location>
        <begin position="235"/>
        <end position="255"/>
    </location>
</feature>
<feature type="transmembrane region" description="Helical" evidence="1">
    <location>
        <begin position="263"/>
        <end position="283"/>
    </location>
</feature>